<feature type="signal peptide" evidence="1">
    <location>
        <begin position="1"/>
        <end position="24"/>
    </location>
</feature>
<feature type="peptide" id="PRO_0000444237" description="Neuropeptide IMFamide" evidence="2">
    <location>
        <begin position="25"/>
        <end position="36"/>
    </location>
</feature>
<feature type="propeptide" id="PRO_0000444238" evidence="4">
    <location>
        <begin position="40"/>
        <end position="72"/>
    </location>
</feature>
<feature type="modified residue" description="Phenylalanine amide" evidence="2">
    <location>
        <position position="36"/>
    </location>
</feature>
<proteinExistence type="evidence at protein level"/>
<dbReference type="GO" id="GO:0005576">
    <property type="term" value="C:extracellular region"/>
    <property type="evidence" value="ECO:0007669"/>
    <property type="project" value="UniProtKB-SubCell"/>
</dbReference>
<dbReference type="GO" id="GO:0007218">
    <property type="term" value="P:neuropeptide signaling pathway"/>
    <property type="evidence" value="ECO:0007669"/>
    <property type="project" value="UniProtKB-KW"/>
</dbReference>
<organism>
    <name type="scientific">Agrotis ipsilon</name>
    <name type="common">Black cutworm moth</name>
    <dbReference type="NCBI Taxonomy" id="56364"/>
    <lineage>
        <taxon>Eukaryota</taxon>
        <taxon>Metazoa</taxon>
        <taxon>Ecdysozoa</taxon>
        <taxon>Arthropoda</taxon>
        <taxon>Hexapoda</taxon>
        <taxon>Insecta</taxon>
        <taxon>Pterygota</taxon>
        <taxon>Neoptera</taxon>
        <taxon>Endopterygota</taxon>
        <taxon>Lepidoptera</taxon>
        <taxon>Glossata</taxon>
        <taxon>Ditrysia</taxon>
        <taxon>Noctuoidea</taxon>
        <taxon>Noctuidae</taxon>
        <taxon>Noctuinae</taxon>
        <taxon>Noctuini</taxon>
        <taxon>Agrotis</taxon>
    </lineage>
</organism>
<evidence type="ECO:0000255" key="1"/>
<evidence type="ECO:0000269" key="2">
    <source>
    </source>
</evidence>
<evidence type="ECO:0000303" key="3">
    <source>
    </source>
</evidence>
<evidence type="ECO:0000305" key="4"/>
<keyword id="KW-0027">Amidation</keyword>
<keyword id="KW-0165">Cleavage on pair of basic residues</keyword>
<keyword id="KW-0903">Direct protein sequencing</keyword>
<keyword id="KW-0527">Neuropeptide</keyword>
<keyword id="KW-0964">Secreted</keyword>
<keyword id="KW-0732">Signal</keyword>
<reference evidence="4" key="1">
    <citation type="journal article" date="2018" name="J. Proteome Res.">
        <title>Mating-induced differential peptidomics of neuropeptides and protein hormones in Agrotis ipsilon moths.</title>
        <authorList>
            <person name="Diesner M."/>
            <person name="Gallot A."/>
            <person name="Binz H."/>
            <person name="Gaertner C."/>
            <person name="Vitecek S."/>
            <person name="Kahnt J."/>
            <person name="Schachtner J."/>
            <person name="Jacquin-Joly E."/>
            <person name="Gadenne C."/>
        </authorList>
    </citation>
    <scope>NUCLEOTIDE SEQUENCE [MRNA]</scope>
    <scope>PROTEIN SEQUENCE OF 25-36</scope>
    <scope>TISSUE SPECIFICITY</scope>
    <scope>MASS SPECTROMETRY</scope>
    <scope>IDENTIFICATION BY MASS SPECTROMETRY</scope>
    <scope>AMIDATION AT PHE-36</scope>
</reference>
<accession>C0HKU0</accession>
<name>IMFA_AGRIP</name>
<sequence>MMRFTIGVVCLVAVLLSLAEVSEANYKNAPMNGIMFGKRGPTEYDQRGKTFTALCEIATEACQAWFPSTENK</sequence>
<protein>
    <recommendedName>
        <fullName evidence="3">Neuropeptide IMFamide</fullName>
    </recommendedName>
</protein>
<comment type="subcellular location">
    <subcellularLocation>
        <location evidence="4">Secreted</location>
    </subcellularLocation>
</comment>
<comment type="tissue specificity">
    <text evidence="2">Expressed in corpora cardiaca (CC), corpora allata (CA), antennal lobe (AL) and gnathal ganglion (GNG) (at protein level). Expression detected in only a few animals (at protein level).</text>
</comment>
<comment type="mass spectrometry"/>
<comment type="similarity">
    <text evidence="4">Belongs to the FARP (FMRFamide related peptide) family.</text>
</comment>